<reference key="1">
    <citation type="submission" date="2006-12" db="EMBL/GenBank/DDBJ databases">
        <title>Complete sequence of Shewanella amazonensis SB2B.</title>
        <authorList>
            <consortium name="US DOE Joint Genome Institute"/>
            <person name="Copeland A."/>
            <person name="Lucas S."/>
            <person name="Lapidus A."/>
            <person name="Barry K."/>
            <person name="Detter J.C."/>
            <person name="Glavina del Rio T."/>
            <person name="Hammon N."/>
            <person name="Israni S."/>
            <person name="Dalin E."/>
            <person name="Tice H."/>
            <person name="Pitluck S."/>
            <person name="Munk A.C."/>
            <person name="Brettin T."/>
            <person name="Bruce D."/>
            <person name="Han C."/>
            <person name="Tapia R."/>
            <person name="Gilna P."/>
            <person name="Schmutz J."/>
            <person name="Larimer F."/>
            <person name="Land M."/>
            <person name="Hauser L."/>
            <person name="Kyrpides N."/>
            <person name="Mikhailova N."/>
            <person name="Fredrickson J."/>
            <person name="Richardson P."/>
        </authorList>
    </citation>
    <scope>NUCLEOTIDE SEQUENCE [LARGE SCALE GENOMIC DNA]</scope>
    <source>
        <strain>ATCC BAA-1098 / SB2B</strain>
    </source>
</reference>
<feature type="chain" id="PRO_1000014098" description="Ion-translocating oxidoreductase complex subunit E">
    <location>
        <begin position="1"/>
        <end position="232"/>
    </location>
</feature>
<feature type="transmembrane region" description="Helical" evidence="1">
    <location>
        <begin position="18"/>
        <end position="38"/>
    </location>
</feature>
<feature type="transmembrane region" description="Helical" evidence="1">
    <location>
        <begin position="39"/>
        <end position="59"/>
    </location>
</feature>
<feature type="transmembrane region" description="Helical" evidence="1">
    <location>
        <begin position="69"/>
        <end position="89"/>
    </location>
</feature>
<feature type="transmembrane region" description="Helical" evidence="1">
    <location>
        <begin position="93"/>
        <end position="113"/>
    </location>
</feature>
<feature type="transmembrane region" description="Helical" evidence="1">
    <location>
        <begin position="128"/>
        <end position="148"/>
    </location>
</feature>
<feature type="transmembrane region" description="Helical" evidence="1">
    <location>
        <begin position="182"/>
        <end position="202"/>
    </location>
</feature>
<proteinExistence type="inferred from homology"/>
<sequence length="232" mass="24537">MSNYKEIAWQGLWKNNPGLVQLLGLCPLLAVTATLTNALGLGLATVAVLIGSNVLVSLVREFVPKEIRIPVFVMIIAALVTVVQLVINAYAYGLYLSLGIFLPLIVTNCVIIGRAEAFASRNSVGAAAFDGLMMGTGFTAVLAVLGAVREILGQGTLFDGADQLLGDWAASLRIELWHVDNSFLLAMLPPGAFIAMGLLIAGKNVIDKRLEAKKPTPEAAPAITRARITKVG</sequence>
<comment type="function">
    <text evidence="1">Part of a membrane-bound complex that couples electron transfer with translocation of ions across the membrane.</text>
</comment>
<comment type="subunit">
    <text evidence="1">The complex is composed of six subunits: RnfA, RnfB, RnfC, RnfD, RnfE and RnfG.</text>
</comment>
<comment type="subcellular location">
    <subcellularLocation>
        <location evidence="1">Cell inner membrane</location>
        <topology evidence="1">Multi-pass membrane protein</topology>
    </subcellularLocation>
</comment>
<comment type="similarity">
    <text evidence="1">Belongs to the NqrDE/RnfAE family.</text>
</comment>
<gene>
    <name evidence="1" type="primary">rnfE</name>
    <name type="ordered locus">Sama_1835</name>
</gene>
<accession>A1S6N4</accession>
<protein>
    <recommendedName>
        <fullName evidence="1">Ion-translocating oxidoreductase complex subunit E</fullName>
        <ecNumber evidence="1">7.-.-.-</ecNumber>
    </recommendedName>
    <alternativeName>
        <fullName evidence="1">Rnf electron transport complex subunit E</fullName>
    </alternativeName>
</protein>
<dbReference type="EC" id="7.-.-.-" evidence="1"/>
<dbReference type="EMBL" id="CP000507">
    <property type="protein sequence ID" value="ABM00041.1"/>
    <property type="molecule type" value="Genomic_DNA"/>
</dbReference>
<dbReference type="RefSeq" id="WP_011759948.1">
    <property type="nucleotide sequence ID" value="NC_008700.1"/>
</dbReference>
<dbReference type="SMR" id="A1S6N4"/>
<dbReference type="STRING" id="326297.Sama_1835"/>
<dbReference type="KEGG" id="saz:Sama_1835"/>
<dbReference type="eggNOG" id="COG4660">
    <property type="taxonomic scope" value="Bacteria"/>
</dbReference>
<dbReference type="HOGENOM" id="CLU_046659_1_0_6"/>
<dbReference type="OrthoDB" id="9782945at2"/>
<dbReference type="Proteomes" id="UP000009175">
    <property type="component" value="Chromosome"/>
</dbReference>
<dbReference type="GO" id="GO:0005886">
    <property type="term" value="C:plasma membrane"/>
    <property type="evidence" value="ECO:0007669"/>
    <property type="project" value="UniProtKB-SubCell"/>
</dbReference>
<dbReference type="GO" id="GO:0022900">
    <property type="term" value="P:electron transport chain"/>
    <property type="evidence" value="ECO:0007669"/>
    <property type="project" value="UniProtKB-UniRule"/>
</dbReference>
<dbReference type="HAMAP" id="MF_00478">
    <property type="entry name" value="RsxE_RnfE"/>
    <property type="match status" value="1"/>
</dbReference>
<dbReference type="InterPro" id="IPR003667">
    <property type="entry name" value="NqrDE/RnfAE"/>
</dbReference>
<dbReference type="InterPro" id="IPR010968">
    <property type="entry name" value="RnfE"/>
</dbReference>
<dbReference type="NCBIfam" id="NF009070">
    <property type="entry name" value="PRK12405.1"/>
    <property type="match status" value="1"/>
</dbReference>
<dbReference type="NCBIfam" id="TIGR01948">
    <property type="entry name" value="rnfE"/>
    <property type="match status" value="1"/>
</dbReference>
<dbReference type="PANTHER" id="PTHR30586">
    <property type="entry name" value="ELECTRON TRANSPORT COMPLEX PROTEIN RNFE"/>
    <property type="match status" value="1"/>
</dbReference>
<dbReference type="PANTHER" id="PTHR30586:SF0">
    <property type="entry name" value="ION-TRANSLOCATING OXIDOREDUCTASE COMPLEX SUBUNIT E"/>
    <property type="match status" value="1"/>
</dbReference>
<dbReference type="Pfam" id="PF02508">
    <property type="entry name" value="Rnf-Nqr"/>
    <property type="match status" value="1"/>
</dbReference>
<dbReference type="PIRSF" id="PIRSF006102">
    <property type="entry name" value="NQR_DE"/>
    <property type="match status" value="1"/>
</dbReference>
<keyword id="KW-0997">Cell inner membrane</keyword>
<keyword id="KW-1003">Cell membrane</keyword>
<keyword id="KW-0249">Electron transport</keyword>
<keyword id="KW-0472">Membrane</keyword>
<keyword id="KW-1185">Reference proteome</keyword>
<keyword id="KW-1278">Translocase</keyword>
<keyword id="KW-0812">Transmembrane</keyword>
<keyword id="KW-1133">Transmembrane helix</keyword>
<keyword id="KW-0813">Transport</keyword>
<organism>
    <name type="scientific">Shewanella amazonensis (strain ATCC BAA-1098 / SB2B)</name>
    <dbReference type="NCBI Taxonomy" id="326297"/>
    <lineage>
        <taxon>Bacteria</taxon>
        <taxon>Pseudomonadati</taxon>
        <taxon>Pseudomonadota</taxon>
        <taxon>Gammaproteobacteria</taxon>
        <taxon>Alteromonadales</taxon>
        <taxon>Shewanellaceae</taxon>
        <taxon>Shewanella</taxon>
    </lineage>
</organism>
<name>RNFE_SHEAM</name>
<evidence type="ECO:0000255" key="1">
    <source>
        <dbReference type="HAMAP-Rule" id="MF_00478"/>
    </source>
</evidence>